<organism>
    <name type="scientific">Homo sapiens</name>
    <name type="common">Human</name>
    <dbReference type="NCBI Taxonomy" id="9606"/>
    <lineage>
        <taxon>Eukaryota</taxon>
        <taxon>Metazoa</taxon>
        <taxon>Chordata</taxon>
        <taxon>Craniata</taxon>
        <taxon>Vertebrata</taxon>
        <taxon>Euteleostomi</taxon>
        <taxon>Mammalia</taxon>
        <taxon>Eutheria</taxon>
        <taxon>Euarchontoglires</taxon>
        <taxon>Primates</taxon>
        <taxon>Haplorrhini</taxon>
        <taxon>Catarrhini</taxon>
        <taxon>Hominidae</taxon>
        <taxon>Homo</taxon>
    </lineage>
</organism>
<proteinExistence type="evidence at protein level"/>
<reference key="1">
    <citation type="journal article" date="1997" name="Nature">
        <title>A model for p53-induced apoptosis.</title>
        <authorList>
            <person name="Polyak K."/>
            <person name="Xia Y."/>
            <person name="Zweier J.L."/>
            <person name="Kinzler K.W."/>
            <person name="Vogelstein B."/>
        </authorList>
    </citation>
    <scope>NUCLEOTIDE SEQUENCE [MRNA] (ISOFORM 1)</scope>
    <scope>INDUCTION BY TP53</scope>
    <source>
        <tissue>Colon cancer</tissue>
    </source>
</reference>
<reference key="2">
    <citation type="journal article" date="2004" name="Nat. Genet.">
        <title>Complete sequencing and characterization of 21,243 full-length human cDNAs.</title>
        <authorList>
            <person name="Ota T."/>
            <person name="Suzuki Y."/>
            <person name="Nishikawa T."/>
            <person name="Otsuki T."/>
            <person name="Sugiyama T."/>
            <person name="Irie R."/>
            <person name="Wakamatsu A."/>
            <person name="Hayashi K."/>
            <person name="Sato H."/>
            <person name="Nagai K."/>
            <person name="Kimura K."/>
            <person name="Makita H."/>
            <person name="Sekine M."/>
            <person name="Obayashi M."/>
            <person name="Nishi T."/>
            <person name="Shibahara T."/>
            <person name="Tanaka T."/>
            <person name="Ishii S."/>
            <person name="Yamamoto J."/>
            <person name="Saito K."/>
            <person name="Kawai Y."/>
            <person name="Isono Y."/>
            <person name="Nakamura Y."/>
            <person name="Nagahari K."/>
            <person name="Murakami K."/>
            <person name="Yasuda T."/>
            <person name="Iwayanagi T."/>
            <person name="Wagatsuma M."/>
            <person name="Shiratori A."/>
            <person name="Sudo H."/>
            <person name="Hosoiri T."/>
            <person name="Kaku Y."/>
            <person name="Kodaira H."/>
            <person name="Kondo H."/>
            <person name="Sugawara M."/>
            <person name="Takahashi M."/>
            <person name="Kanda K."/>
            <person name="Yokoi T."/>
            <person name="Furuya T."/>
            <person name="Kikkawa E."/>
            <person name="Omura Y."/>
            <person name="Abe K."/>
            <person name="Kamihara K."/>
            <person name="Katsuta N."/>
            <person name="Sato K."/>
            <person name="Tanikawa M."/>
            <person name="Yamazaki M."/>
            <person name="Ninomiya K."/>
            <person name="Ishibashi T."/>
            <person name="Yamashita H."/>
            <person name="Murakawa K."/>
            <person name="Fujimori K."/>
            <person name="Tanai H."/>
            <person name="Kimata M."/>
            <person name="Watanabe M."/>
            <person name="Hiraoka S."/>
            <person name="Chiba Y."/>
            <person name="Ishida S."/>
            <person name="Ono Y."/>
            <person name="Takiguchi S."/>
            <person name="Watanabe S."/>
            <person name="Yosida M."/>
            <person name="Hotuta T."/>
            <person name="Kusano J."/>
            <person name="Kanehori K."/>
            <person name="Takahashi-Fujii A."/>
            <person name="Hara H."/>
            <person name="Tanase T.-O."/>
            <person name="Nomura Y."/>
            <person name="Togiya S."/>
            <person name="Komai F."/>
            <person name="Hara R."/>
            <person name="Takeuchi K."/>
            <person name="Arita M."/>
            <person name="Imose N."/>
            <person name="Musashino K."/>
            <person name="Yuuki H."/>
            <person name="Oshima A."/>
            <person name="Sasaki N."/>
            <person name="Aotsuka S."/>
            <person name="Yoshikawa Y."/>
            <person name="Matsunawa H."/>
            <person name="Ichihara T."/>
            <person name="Shiohata N."/>
            <person name="Sano S."/>
            <person name="Moriya S."/>
            <person name="Momiyama H."/>
            <person name="Satoh N."/>
            <person name="Takami S."/>
            <person name="Terashima Y."/>
            <person name="Suzuki O."/>
            <person name="Nakagawa S."/>
            <person name="Senoh A."/>
            <person name="Mizoguchi H."/>
            <person name="Goto Y."/>
            <person name="Shimizu F."/>
            <person name="Wakebe H."/>
            <person name="Hishigaki H."/>
            <person name="Watanabe T."/>
            <person name="Sugiyama A."/>
            <person name="Takemoto M."/>
            <person name="Kawakami B."/>
            <person name="Yamazaki M."/>
            <person name="Watanabe K."/>
            <person name="Kumagai A."/>
            <person name="Itakura S."/>
            <person name="Fukuzumi Y."/>
            <person name="Fujimori Y."/>
            <person name="Komiyama M."/>
            <person name="Tashiro H."/>
            <person name="Tanigami A."/>
            <person name="Fujiwara T."/>
            <person name="Ono T."/>
            <person name="Yamada K."/>
            <person name="Fujii Y."/>
            <person name="Ozaki K."/>
            <person name="Hirao M."/>
            <person name="Ohmori Y."/>
            <person name="Kawabata A."/>
            <person name="Hikiji T."/>
            <person name="Kobatake N."/>
            <person name="Inagaki H."/>
            <person name="Ikema Y."/>
            <person name="Okamoto S."/>
            <person name="Okitani R."/>
            <person name="Kawakami T."/>
            <person name="Noguchi S."/>
            <person name="Itoh T."/>
            <person name="Shigeta K."/>
            <person name="Senba T."/>
            <person name="Matsumura K."/>
            <person name="Nakajima Y."/>
            <person name="Mizuno T."/>
            <person name="Morinaga M."/>
            <person name="Sasaki M."/>
            <person name="Togashi T."/>
            <person name="Oyama M."/>
            <person name="Hata H."/>
            <person name="Watanabe M."/>
            <person name="Komatsu T."/>
            <person name="Mizushima-Sugano J."/>
            <person name="Satoh T."/>
            <person name="Shirai Y."/>
            <person name="Takahashi Y."/>
            <person name="Nakagawa K."/>
            <person name="Okumura K."/>
            <person name="Nagase T."/>
            <person name="Nomura N."/>
            <person name="Kikuchi H."/>
            <person name="Masuho Y."/>
            <person name="Yamashita R."/>
            <person name="Nakai K."/>
            <person name="Yada T."/>
            <person name="Nakamura Y."/>
            <person name="Ohara O."/>
            <person name="Isogai T."/>
            <person name="Sugano S."/>
        </authorList>
    </citation>
    <scope>NUCLEOTIDE SEQUENCE [LARGE SCALE MRNA] (ISOFORMS 1 AND 2)</scope>
    <source>
        <tissue>Colon</tissue>
        <tissue>Synovium</tissue>
    </source>
</reference>
<reference key="3">
    <citation type="submission" date="2005-07" db="EMBL/GenBank/DDBJ databases">
        <authorList>
            <person name="Mural R.J."/>
            <person name="Istrail S."/>
            <person name="Sutton G.G."/>
            <person name="Florea L."/>
            <person name="Halpern A.L."/>
            <person name="Mobarry C.M."/>
            <person name="Lippert R."/>
            <person name="Walenz B."/>
            <person name="Shatkay H."/>
            <person name="Dew I."/>
            <person name="Miller J.R."/>
            <person name="Flanigan M.J."/>
            <person name="Edwards N.J."/>
            <person name="Bolanos R."/>
            <person name="Fasulo D."/>
            <person name="Halldorsson B.V."/>
            <person name="Hannenhalli S."/>
            <person name="Turner R."/>
            <person name="Yooseph S."/>
            <person name="Lu F."/>
            <person name="Nusskern D.R."/>
            <person name="Shue B.C."/>
            <person name="Zheng X.H."/>
            <person name="Zhong F."/>
            <person name="Delcher A.L."/>
            <person name="Huson D.H."/>
            <person name="Kravitz S.A."/>
            <person name="Mouchard L."/>
            <person name="Reinert K."/>
            <person name="Remington K.A."/>
            <person name="Clark A.G."/>
            <person name="Waterman M.S."/>
            <person name="Eichler E.E."/>
            <person name="Adams M.D."/>
            <person name="Hunkapiller M.W."/>
            <person name="Myers E.W."/>
            <person name="Venter J.C."/>
        </authorList>
    </citation>
    <scope>NUCLEOTIDE SEQUENCE [LARGE SCALE GENOMIC DNA]</scope>
</reference>
<reference key="4">
    <citation type="journal article" date="2004" name="Genome Res.">
        <title>The status, quality, and expansion of the NIH full-length cDNA project: the Mammalian Gene Collection (MGC).</title>
        <authorList>
            <consortium name="The MGC Project Team"/>
        </authorList>
    </citation>
    <scope>NUCLEOTIDE SEQUENCE [LARGE SCALE MRNA] (ISOFORM 1)</scope>
    <source>
        <tissue>Lung</tissue>
    </source>
</reference>
<reference key="5">
    <citation type="journal article" date="2001" name="Oncogene">
        <title>Candidate tumour suppressor genes at 11q23-q24 in breast cancer: evidence of alterations in PIG8, a gene involved in p53-induced apoptosis.</title>
        <authorList>
            <person name="Gentile M."/>
            <person name="Ahnstrom M."/>
            <person name="Schon F."/>
            <person name="Wingren S."/>
        </authorList>
    </citation>
    <scope>POSSIBLE INVOLVEMENT IN BREAST CANCER</scope>
    <scope>VARIANTS GLY-30; TRP-195; ASP-196; TYR-197; HIS-199 AND ALA-319</scope>
</reference>
<reference key="6">
    <citation type="journal article" date="2006" name="Cell">
        <title>Global, in vivo, and site-specific phosphorylation dynamics in signaling networks.</title>
        <authorList>
            <person name="Olsen J.V."/>
            <person name="Blagoev B."/>
            <person name="Gnad F."/>
            <person name="Macek B."/>
            <person name="Kumar C."/>
            <person name="Mortensen P."/>
            <person name="Mann M."/>
        </authorList>
    </citation>
    <scope>PHOSPHORYLATION [LARGE SCALE ANALYSIS] AT SER-56</scope>
    <scope>IDENTIFICATION BY MASS SPECTROMETRY [LARGE SCALE ANALYSIS]</scope>
    <source>
        <tissue>Cervix carcinoma</tissue>
    </source>
</reference>
<reference key="7">
    <citation type="journal article" date="2008" name="Mol. Cell">
        <title>Kinase-selective enrichment enables quantitative phosphoproteomics of the kinome across the cell cycle.</title>
        <authorList>
            <person name="Daub H."/>
            <person name="Olsen J.V."/>
            <person name="Bairlein M."/>
            <person name="Gnad F."/>
            <person name="Oppermann F.S."/>
            <person name="Korner R."/>
            <person name="Greff Z."/>
            <person name="Keri G."/>
            <person name="Stemmann O."/>
            <person name="Mann M."/>
        </authorList>
    </citation>
    <scope>PHOSPHORYLATION [LARGE SCALE ANALYSIS] AT SER-326</scope>
    <scope>IDENTIFICATION BY MASS SPECTROMETRY [LARGE SCALE ANALYSIS]</scope>
    <source>
        <tissue>Cervix carcinoma</tissue>
    </source>
</reference>
<reference key="8">
    <citation type="journal article" date="2008" name="Proc. Natl. Acad. Sci. U.S.A.">
        <title>A quantitative atlas of mitotic phosphorylation.</title>
        <authorList>
            <person name="Dephoure N."/>
            <person name="Zhou C."/>
            <person name="Villen J."/>
            <person name="Beausoleil S.A."/>
            <person name="Bakalarski C.E."/>
            <person name="Elledge S.J."/>
            <person name="Gygi S.P."/>
        </authorList>
    </citation>
    <scope>PHOSPHORYLATION [LARGE SCALE ANALYSIS] AT SER-326 AND SER-330</scope>
    <scope>IDENTIFICATION BY MASS SPECTROMETRY [LARGE SCALE ANALYSIS]</scope>
    <source>
        <tissue>Cervix carcinoma</tissue>
    </source>
</reference>
<reference key="9">
    <citation type="journal article" date="2009" name="Sci. Signal.">
        <title>Quantitative phosphoproteomic analysis of T cell receptor signaling reveals system-wide modulation of protein-protein interactions.</title>
        <authorList>
            <person name="Mayya V."/>
            <person name="Lundgren D.H."/>
            <person name="Hwang S.-I."/>
            <person name="Rezaul K."/>
            <person name="Wu L."/>
            <person name="Eng J.K."/>
            <person name="Rodionov V."/>
            <person name="Han D.K."/>
        </authorList>
    </citation>
    <scope>IDENTIFICATION BY MASS SPECTROMETRY [LARGE SCALE ANALYSIS]</scope>
    <source>
        <tissue>Leukemic T-cell</tissue>
    </source>
</reference>
<reference key="10">
    <citation type="journal article" date="2010" name="Sci. Signal.">
        <title>Quantitative phosphoproteomics reveals widespread full phosphorylation site occupancy during mitosis.</title>
        <authorList>
            <person name="Olsen J.V."/>
            <person name="Vermeulen M."/>
            <person name="Santamaria A."/>
            <person name="Kumar C."/>
            <person name="Miller M.L."/>
            <person name="Jensen L.J."/>
            <person name="Gnad F."/>
            <person name="Cox J."/>
            <person name="Jensen T.S."/>
            <person name="Nigg E.A."/>
            <person name="Brunak S."/>
            <person name="Mann M."/>
        </authorList>
    </citation>
    <scope>PHOSPHORYLATION [LARGE SCALE ANALYSIS] AT SER-56</scope>
    <scope>IDENTIFICATION BY MASS SPECTROMETRY [LARGE SCALE ANALYSIS]</scope>
    <source>
        <tissue>Cervix carcinoma</tissue>
    </source>
</reference>
<reference key="11">
    <citation type="journal article" date="2011" name="BMC Syst. Biol.">
        <title>Initial characterization of the human central proteome.</title>
        <authorList>
            <person name="Burkard T.R."/>
            <person name="Planyavsky M."/>
            <person name="Kaupe I."/>
            <person name="Breitwieser F.P."/>
            <person name="Buerckstuemmer T."/>
            <person name="Bennett K.L."/>
            <person name="Superti-Furga G."/>
            <person name="Colinge J."/>
        </authorList>
    </citation>
    <scope>IDENTIFICATION BY MASS SPECTROMETRY [LARGE SCALE ANALYSIS]</scope>
</reference>
<reference key="12">
    <citation type="journal article" date="2011" name="Int. J. Cancer">
        <title>Inactivation of CHEK1 and EI24 are associated with the development of invasive cervical carcinoma: Clinical and prognostic implications.</title>
        <authorList>
            <person name="Mazumder ' Indra ' D."/>
            <person name="Mitra S."/>
            <person name="Singh R.K."/>
            <person name="Dutta S."/>
            <person name="Roy A."/>
            <person name="Mondal R.K."/>
            <person name="Basu P.S."/>
            <person name="Roychoudhury S."/>
            <person name="Panda C.K."/>
        </authorList>
    </citation>
    <scope>SUBCELLULAR LOCATION</scope>
    <scope>POSSIBLE INVOLVEMENT IN CERVICAL CANCER</scope>
</reference>
<reference key="13">
    <citation type="journal article" date="2012" name="Proc. Natl. Acad. Sci. U.S.A.">
        <title>N-terminal acetylome analyses and functional insights of the N-terminal acetyltransferase NatB.</title>
        <authorList>
            <person name="Van Damme P."/>
            <person name="Lasa M."/>
            <person name="Polevoda B."/>
            <person name="Gazquez C."/>
            <person name="Elosegui-Artola A."/>
            <person name="Kim D.S."/>
            <person name="De Juan-Pardo E."/>
            <person name="Demeyer K."/>
            <person name="Hole K."/>
            <person name="Larrea E."/>
            <person name="Timmerman E."/>
            <person name="Prieto J."/>
            <person name="Arnesen T."/>
            <person name="Sherman F."/>
            <person name="Gevaert K."/>
            <person name="Aldabe R."/>
        </authorList>
    </citation>
    <scope>ACETYLATION [LARGE SCALE ANALYSIS] AT ALA-2</scope>
    <scope>CLEAVAGE OF INITIATOR METHIONINE [LARGE SCALE ANALYSIS]</scope>
    <scope>IDENTIFICATION BY MASS SPECTROMETRY [LARGE SCALE ANALYSIS]</scope>
</reference>
<reference key="14">
    <citation type="journal article" date="2013" name="J. Proteome Res.">
        <title>Toward a comprehensive characterization of a human cancer cell phosphoproteome.</title>
        <authorList>
            <person name="Zhou H."/>
            <person name="Di Palma S."/>
            <person name="Preisinger C."/>
            <person name="Peng M."/>
            <person name="Polat A.N."/>
            <person name="Heck A.J."/>
            <person name="Mohammed S."/>
        </authorList>
    </citation>
    <scope>PHOSPHORYLATION [LARGE SCALE ANALYSIS] AT SER-330</scope>
    <scope>IDENTIFICATION BY MASS SPECTROMETRY [LARGE SCALE ANALYSIS]</scope>
    <source>
        <tissue>Cervix carcinoma</tissue>
        <tissue>Erythroleukemia</tissue>
    </source>
</reference>
<reference key="15">
    <citation type="journal article" date="2014" name="J. Proteomics">
        <title>An enzyme assisted RP-RPLC approach for in-depth analysis of human liver phosphoproteome.</title>
        <authorList>
            <person name="Bian Y."/>
            <person name="Song C."/>
            <person name="Cheng K."/>
            <person name="Dong M."/>
            <person name="Wang F."/>
            <person name="Huang J."/>
            <person name="Sun D."/>
            <person name="Wang L."/>
            <person name="Ye M."/>
            <person name="Zou H."/>
        </authorList>
    </citation>
    <scope>PHOSPHORYLATION [LARGE SCALE ANALYSIS] AT SER-330</scope>
    <scope>IDENTIFICATION BY MASS SPECTROMETRY [LARGE SCALE ANALYSIS]</scope>
    <source>
        <tissue>Liver</tissue>
    </source>
</reference>
<sequence>MADSVKTFLQDLARGIKDSIWGICTISKLDARIQQKREEQRRRRASSVLAQRRAQSIERKQESEPRIVSRIFQCCAWNGGVFWFSLLLFYRVFIPVLQSVTARIIGDPSLHGDVWSWLEFFLTSIFSALWVLPLFVLSKVVNAIWFQDIADLAFEVSGRKPHPFPSVSKIIADMLFNLLLQALFLIQGMFVSLFPIHLVGQLVSLLHMSLLYSLYCFEYRWFNKGIEMHQRLSNIERNWPYYFGFGLPLAFLTAMQSSYIISGCLFSILFPLFIISANEAKTPGKAYLFQLRLFSLVVFLSNRLFHKTVYLQSALSSSTSAEKFPSPHPSPAKLKATAGH</sequence>
<accession>O14681</accession>
<accession>A8K7D6</accession>
<accession>B4DKL6</accession>
<accession>Q9BUQ1</accession>
<comment type="function">
    <text evidence="1">Acts as a negative growth regulator via p53-mediated apoptosis pathway. Regulates formation of degradative autolysosomes during autophagy (By similarity).</text>
</comment>
<comment type="subunit">
    <text evidence="1">Interacts with BCL2.</text>
</comment>
<comment type="interaction">
    <interactant intactId="EBI-2339413">
        <id>O14681</id>
    </interactant>
    <interactant intactId="EBI-752094">
        <id>Q12982</id>
        <label>BNIP2</label>
    </interactant>
    <organismsDiffer>false</organismsDiffer>
    <experiments>3</experiments>
</comment>
<comment type="interaction">
    <interactant intactId="EBI-2339413">
        <id>O14681</id>
    </interactant>
    <interactant intactId="EBI-1050125">
        <id>O15173</id>
        <label>PGRMC2</label>
    </interactant>
    <organismsDiffer>false</organismsDiffer>
    <experiments>3</experiments>
</comment>
<comment type="interaction">
    <interactant intactId="EBI-2339413">
        <id>O14681</id>
    </interactant>
    <interactant intactId="EBI-712367">
        <id>Q9UI14</id>
        <label>RABAC1</label>
    </interactant>
    <organismsDiffer>false</organismsDiffer>
    <experiments>3</experiments>
</comment>
<comment type="interaction">
    <interactant intactId="EBI-2339413">
        <id>O14681</id>
    </interactant>
    <interactant intactId="EBI-11603430">
        <id>Q6PL24</id>
        <label>TMED8</label>
    </interactant>
    <organismsDiffer>false</organismsDiffer>
    <experiments>3</experiments>
</comment>
<comment type="interaction">
    <interactant intactId="EBI-2339413">
        <id>O14681</id>
    </interactant>
    <interactant intactId="EBI-8638294">
        <id>Q9NUH8</id>
        <label>TMEM14B</label>
    </interactant>
    <organismsDiffer>false</organismsDiffer>
    <experiments>3</experiments>
</comment>
<comment type="subcellular location">
    <subcellularLocation>
        <location evidence="7">Nucleus membrane</location>
        <topology evidence="7">Multi-pass membrane protein</topology>
    </subcellularLocation>
    <subcellularLocation>
        <location evidence="7">Cytoplasm</location>
    </subcellularLocation>
    <subcellularLocation>
        <location evidence="1">Endoplasmic reticulum membrane</location>
        <topology evidence="1">Multi-pass membrane protein</topology>
    </subcellularLocation>
</comment>
<comment type="alternative products">
    <event type="alternative splicing"/>
    <isoform>
        <id>O14681-1</id>
        <name>1</name>
        <sequence type="displayed"/>
    </isoform>
    <isoform>
        <id>O14681-3</id>
        <name>2</name>
        <sequence type="described" ref="VSP_055466"/>
    </isoform>
</comment>
<comment type="induction">
    <text evidence="8">By p53/TP53.</text>
</comment>
<comment type="disease">
    <text>EI24 is on a chromosomal region frequently deleted in solid tumors, and it is thought to play a role in breast and cervical cancer. Particularly, expression analysis of EI24 in cancerous tissues shows that EI24 loss is associated with tumor invasiveness.</text>
</comment>
<comment type="similarity">
    <text evidence="10">Belongs to the EI24 family.</text>
</comment>
<comment type="sequence caution" evidence="10">
    <conflict type="erroneous initiation">
        <sequence resource="EMBL-CDS" id="AAC39531"/>
    </conflict>
    <text>Extended N-terminus.</text>
</comment>
<feature type="initiator methionine" description="Removed" evidence="15">
    <location>
        <position position="1"/>
    </location>
</feature>
<feature type="chain" id="PRO_0000086945" description="Etoposide-induced protein 2.4 homolog">
    <location>
        <begin position="2"/>
        <end position="340"/>
    </location>
</feature>
<feature type="transmembrane region" description="Helical" evidence="4">
    <location>
        <begin position="77"/>
        <end position="97"/>
    </location>
</feature>
<feature type="transmembrane region" description="Helical" evidence="4">
    <location>
        <begin position="117"/>
        <end position="137"/>
    </location>
</feature>
<feature type="transmembrane region" description="Helical" evidence="4">
    <location>
        <begin position="179"/>
        <end position="199"/>
    </location>
</feature>
<feature type="transmembrane region" description="Helical" evidence="4">
    <location>
        <begin position="238"/>
        <end position="255"/>
    </location>
</feature>
<feature type="transmembrane region" description="Helical" evidence="4">
    <location>
        <begin position="257"/>
        <end position="277"/>
    </location>
</feature>
<feature type="region of interest" description="Disordered" evidence="5">
    <location>
        <begin position="319"/>
        <end position="340"/>
    </location>
</feature>
<feature type="modified residue" description="N-acetylalanine" evidence="15">
    <location>
        <position position="2"/>
    </location>
</feature>
<feature type="modified residue" description="Phosphoserine" evidence="2">
    <location>
        <position position="46"/>
    </location>
</feature>
<feature type="modified residue" description="Phosphoserine" evidence="2">
    <location>
        <position position="47"/>
    </location>
</feature>
<feature type="modified residue" description="Phosphoserine" evidence="11 14">
    <location>
        <position position="56"/>
    </location>
</feature>
<feature type="modified residue" description="Phosphoserine" evidence="3">
    <location>
        <position position="320"/>
    </location>
</feature>
<feature type="modified residue" description="Phosphoserine" evidence="12 13">
    <location>
        <position position="326"/>
    </location>
</feature>
<feature type="modified residue" description="Phosphoserine" evidence="12 16 17">
    <location>
        <position position="330"/>
    </location>
</feature>
<feature type="splice variant" id="VSP_055466" description="In isoform 2." evidence="9">
    <location>
        <begin position="15"/>
        <end position="28"/>
    </location>
</feature>
<feature type="sequence variant" id="VAR_065459" description="In some patients with early onset breast cancer." evidence="6">
    <original>D</original>
    <variation>G</variation>
    <location>
        <position position="30"/>
    </location>
</feature>
<feature type="sequence variant" id="VAR_065460" description="In some patients with early onset breast cancer; requires 2 nucleotide substitutions." evidence="6">
    <original>P</original>
    <variation>W</variation>
    <location>
        <position position="195"/>
    </location>
</feature>
<feature type="sequence variant" id="VAR_065461" description="In some patients with early onset breast cancer; requires 2 nucleotide substitutions." evidence="6">
    <original>I</original>
    <variation>D</variation>
    <location>
        <position position="196"/>
    </location>
</feature>
<feature type="sequence variant" id="VAR_065462" description="In some patients with early onset breast cancer." evidence="6">
    <original>H</original>
    <variation>Y</variation>
    <location>
        <position position="197"/>
    </location>
</feature>
<feature type="sequence variant" id="VAR_065463" description="In some patients with early onset breast cancer; requires 2 nucleotide substitutions." evidence="6">
    <original>V</original>
    <variation>H</variation>
    <location>
        <position position="199"/>
    </location>
</feature>
<feature type="sequence variant" id="VAR_065464" description="In some patients with early onset breast cancer; dbSNP:rs375652371." evidence="6">
    <original>T</original>
    <variation>A</variation>
    <location>
        <position position="319"/>
    </location>
</feature>
<feature type="sequence conflict" description="In Ref. 1; AAC39531." evidence="10" ref="1">
    <original>A</original>
    <variation>P</variation>
    <location>
        <position position="54"/>
    </location>
</feature>
<feature type="sequence conflict" description="In Ref. 1; AAC39531." evidence="10" ref="1">
    <original>E</original>
    <variation>G</variation>
    <location>
        <position position="119"/>
    </location>
</feature>
<feature type="sequence conflict" description="In Ref. 1; AAC39531." evidence="10" ref="1">
    <original>L</original>
    <variation>V</variation>
    <location>
        <position position="129"/>
    </location>
</feature>
<feature type="sequence conflict" description="In Ref. 2; BAF84640." evidence="10" ref="2">
    <original>L</original>
    <variation>V</variation>
    <location>
        <position position="132"/>
    </location>
</feature>
<feature type="sequence conflict" description="In Ref. 2; BAG59228." evidence="10" ref="2">
    <original>A</original>
    <variation>S</variation>
    <location>
        <position position="254"/>
    </location>
</feature>
<protein>
    <recommendedName>
        <fullName>Etoposide-induced protein 2.4 homolog</fullName>
    </recommendedName>
    <alternativeName>
        <fullName>p53-induced gene 8 protein</fullName>
    </alternativeName>
</protein>
<dbReference type="EMBL" id="AF010313">
    <property type="protein sequence ID" value="AAC39531.2"/>
    <property type="status" value="ALT_INIT"/>
    <property type="molecule type" value="mRNA"/>
</dbReference>
<dbReference type="EMBL" id="AK291951">
    <property type="protein sequence ID" value="BAF84640.1"/>
    <property type="molecule type" value="mRNA"/>
</dbReference>
<dbReference type="EMBL" id="AK296620">
    <property type="protein sequence ID" value="BAG59228.1"/>
    <property type="molecule type" value="mRNA"/>
</dbReference>
<dbReference type="EMBL" id="AK315841">
    <property type="protein sequence ID" value="BAF98732.1"/>
    <property type="molecule type" value="mRNA"/>
</dbReference>
<dbReference type="EMBL" id="CH471065">
    <property type="protein sequence ID" value="EAW67641.1"/>
    <property type="molecule type" value="Genomic_DNA"/>
</dbReference>
<dbReference type="EMBL" id="BC002390">
    <property type="protein sequence ID" value="AAH02390.1"/>
    <property type="molecule type" value="mRNA"/>
</dbReference>
<dbReference type="CCDS" id="CCDS73410.1">
    <molecule id="O14681-1"/>
</dbReference>
<dbReference type="CCDS" id="CCDS76493.1">
    <molecule id="O14681-3"/>
</dbReference>
<dbReference type="RefSeq" id="NP_001277064.1">
    <molecule id="O14681-3"/>
    <property type="nucleotide sequence ID" value="NM_001290135.2"/>
</dbReference>
<dbReference type="RefSeq" id="NP_004870.3">
    <molecule id="O14681-1"/>
    <property type="nucleotide sequence ID" value="NM_004879.4"/>
</dbReference>
<dbReference type="RefSeq" id="XP_011541371.1">
    <molecule id="O14681-1"/>
    <property type="nucleotide sequence ID" value="XM_011543069.3"/>
</dbReference>
<dbReference type="RefSeq" id="XP_054226532.1">
    <molecule id="O14681-1"/>
    <property type="nucleotide sequence ID" value="XM_054370557.1"/>
</dbReference>
<dbReference type="BioGRID" id="114914">
    <property type="interactions" value="134"/>
</dbReference>
<dbReference type="FunCoup" id="O14681">
    <property type="interactions" value="2028"/>
</dbReference>
<dbReference type="IntAct" id="O14681">
    <property type="interactions" value="54"/>
</dbReference>
<dbReference type="MINT" id="O14681"/>
<dbReference type="STRING" id="9606.ENSP00000278903"/>
<dbReference type="TCDB" id="2.A.121.3.1">
    <property type="family name" value="the sulfate transporter (cysz) family"/>
</dbReference>
<dbReference type="iPTMnet" id="O14681"/>
<dbReference type="PhosphoSitePlus" id="O14681"/>
<dbReference type="SwissPalm" id="O14681"/>
<dbReference type="BioMuta" id="EI24"/>
<dbReference type="jPOST" id="O14681"/>
<dbReference type="MassIVE" id="O14681"/>
<dbReference type="PaxDb" id="9606-ENSP00000278903"/>
<dbReference type="PeptideAtlas" id="O14681"/>
<dbReference type="ProteomicsDB" id="48164">
    <molecule id="O14681-1"/>
</dbReference>
<dbReference type="Pumba" id="O14681"/>
<dbReference type="Antibodypedia" id="32951">
    <property type="antibodies" value="169 antibodies from 31 providers"/>
</dbReference>
<dbReference type="DNASU" id="9538"/>
<dbReference type="Ensembl" id="ENST00000278903.11">
    <molecule id="O14681-1"/>
    <property type="protein sequence ID" value="ENSP00000278903.7"/>
    <property type="gene ID" value="ENSG00000149547.15"/>
</dbReference>
<dbReference type="Ensembl" id="ENST00000534546.5">
    <molecule id="O14681-3"/>
    <property type="protein sequence ID" value="ENSP00000479943.1"/>
    <property type="gene ID" value="ENSG00000149547.15"/>
</dbReference>
<dbReference type="Ensembl" id="ENST00000620753.4">
    <molecule id="O14681-1"/>
    <property type="protein sequence ID" value="ENSP00000484510.1"/>
    <property type="gene ID" value="ENSG00000149547.15"/>
</dbReference>
<dbReference type="GeneID" id="9538"/>
<dbReference type="KEGG" id="hsa:9538"/>
<dbReference type="MANE-Select" id="ENST00000278903.11">
    <property type="protein sequence ID" value="ENSP00000278903.7"/>
    <property type="RefSeq nucleotide sequence ID" value="NM_004879.5"/>
    <property type="RefSeq protein sequence ID" value="NP_004870.3"/>
</dbReference>
<dbReference type="UCSC" id="uc031yiu.2">
    <molecule id="O14681-1"/>
    <property type="organism name" value="human"/>
</dbReference>
<dbReference type="AGR" id="HGNC:13276"/>
<dbReference type="CTD" id="9538"/>
<dbReference type="DisGeNET" id="9538"/>
<dbReference type="GeneCards" id="EI24"/>
<dbReference type="HGNC" id="HGNC:13276">
    <property type="gene designation" value="EI24"/>
</dbReference>
<dbReference type="HPA" id="ENSG00000149547">
    <property type="expression patterns" value="Tissue enhanced (parathyroid)"/>
</dbReference>
<dbReference type="MIM" id="605170">
    <property type="type" value="gene"/>
</dbReference>
<dbReference type="neXtProt" id="NX_O14681"/>
<dbReference type="OpenTargets" id="ENSG00000149547"/>
<dbReference type="PharmGKB" id="PA134937367"/>
<dbReference type="VEuPathDB" id="HostDB:ENSG00000149547"/>
<dbReference type="eggNOG" id="KOG3966">
    <property type="taxonomic scope" value="Eukaryota"/>
</dbReference>
<dbReference type="GeneTree" id="ENSGT00390000018633"/>
<dbReference type="HOGENOM" id="CLU_031164_0_0_1"/>
<dbReference type="InParanoid" id="O14681"/>
<dbReference type="OMA" id="HMCLLYA"/>
<dbReference type="OrthoDB" id="266518at2759"/>
<dbReference type="PAN-GO" id="O14681">
    <property type="GO annotations" value="2 GO annotations based on evolutionary models"/>
</dbReference>
<dbReference type="PhylomeDB" id="O14681"/>
<dbReference type="TreeFam" id="TF314441"/>
<dbReference type="PathwayCommons" id="O14681"/>
<dbReference type="SignaLink" id="O14681"/>
<dbReference type="BioGRID-ORCS" id="9538">
    <property type="hits" value="15 hits in 323 CRISPR screens"/>
</dbReference>
<dbReference type="ChiTaRS" id="EI24">
    <property type="organism name" value="human"/>
</dbReference>
<dbReference type="GeneWiki" id="EI24"/>
<dbReference type="GenomeRNAi" id="9538"/>
<dbReference type="Pharos" id="O14681">
    <property type="development level" value="Tbio"/>
</dbReference>
<dbReference type="PRO" id="PR:O14681"/>
<dbReference type="Proteomes" id="UP000005640">
    <property type="component" value="Chromosome 11"/>
</dbReference>
<dbReference type="RNAct" id="O14681">
    <property type="molecule type" value="protein"/>
</dbReference>
<dbReference type="Bgee" id="ENSG00000149547">
    <property type="expression patterns" value="Expressed in secondary oocyte and 204 other cell types or tissues"/>
</dbReference>
<dbReference type="ExpressionAtlas" id="O14681">
    <property type="expression patterns" value="baseline and differential"/>
</dbReference>
<dbReference type="GO" id="GO:0005829">
    <property type="term" value="C:cytosol"/>
    <property type="evidence" value="ECO:0000314"/>
    <property type="project" value="HPA"/>
</dbReference>
<dbReference type="GO" id="GO:0005783">
    <property type="term" value="C:endoplasmic reticulum"/>
    <property type="evidence" value="ECO:0000314"/>
    <property type="project" value="HPA"/>
</dbReference>
<dbReference type="GO" id="GO:0005789">
    <property type="term" value="C:endoplasmic reticulum membrane"/>
    <property type="evidence" value="ECO:0007669"/>
    <property type="project" value="UniProtKB-SubCell"/>
</dbReference>
<dbReference type="GO" id="GO:0005794">
    <property type="term" value="C:Golgi apparatus"/>
    <property type="evidence" value="ECO:0000314"/>
    <property type="project" value="HPA"/>
</dbReference>
<dbReference type="GO" id="GO:0016020">
    <property type="term" value="C:membrane"/>
    <property type="evidence" value="ECO:0007005"/>
    <property type="project" value="UniProtKB"/>
</dbReference>
<dbReference type="GO" id="GO:0031965">
    <property type="term" value="C:nuclear membrane"/>
    <property type="evidence" value="ECO:0007669"/>
    <property type="project" value="UniProtKB-SubCell"/>
</dbReference>
<dbReference type="GO" id="GO:0061676">
    <property type="term" value="F:importin-alpha family protein binding"/>
    <property type="evidence" value="ECO:0000353"/>
    <property type="project" value="MGI"/>
</dbReference>
<dbReference type="GO" id="GO:0006915">
    <property type="term" value="P:apoptotic process"/>
    <property type="evidence" value="ECO:0000304"/>
    <property type="project" value="ProtInc"/>
</dbReference>
<dbReference type="GO" id="GO:0071494">
    <property type="term" value="P:cellular response to UV-C"/>
    <property type="evidence" value="ECO:0007669"/>
    <property type="project" value="Ensembl"/>
</dbReference>
<dbReference type="GO" id="GO:0008630">
    <property type="term" value="P:intrinsic apoptotic signaling pathway in response to DNA damage"/>
    <property type="evidence" value="ECO:0007669"/>
    <property type="project" value="Ensembl"/>
</dbReference>
<dbReference type="GO" id="GO:0016236">
    <property type="term" value="P:macroautophagy"/>
    <property type="evidence" value="ECO:0000318"/>
    <property type="project" value="GO_Central"/>
</dbReference>
<dbReference type="GO" id="GO:0030308">
    <property type="term" value="P:negative regulation of cell growth"/>
    <property type="evidence" value="ECO:0000314"/>
    <property type="project" value="MGI"/>
</dbReference>
<dbReference type="GO" id="GO:0042308">
    <property type="term" value="P:negative regulation of protein import into nucleus"/>
    <property type="evidence" value="ECO:0007669"/>
    <property type="project" value="Ensembl"/>
</dbReference>
<dbReference type="GO" id="GO:0050885">
    <property type="term" value="P:neuromuscular process controlling balance"/>
    <property type="evidence" value="ECO:0007669"/>
    <property type="project" value="Ensembl"/>
</dbReference>
<dbReference type="GO" id="GO:2001244">
    <property type="term" value="P:positive regulation of intrinsic apoptotic signaling pathway"/>
    <property type="evidence" value="ECO:0007669"/>
    <property type="project" value="Ensembl"/>
</dbReference>
<dbReference type="GO" id="GO:0009410">
    <property type="term" value="P:response to xenobiotic stimulus"/>
    <property type="evidence" value="ECO:0007669"/>
    <property type="project" value="Ensembl"/>
</dbReference>
<dbReference type="PANTHER" id="PTHR21389:SF0">
    <property type="entry name" value="ETOPOSIDE-INDUCED PROTEIN 2.4 HOMOLOG"/>
    <property type="match status" value="1"/>
</dbReference>
<dbReference type="PANTHER" id="PTHR21389">
    <property type="entry name" value="P53 INDUCED PROTEIN"/>
    <property type="match status" value="1"/>
</dbReference>
<dbReference type="Pfam" id="PF07264">
    <property type="entry name" value="EI24"/>
    <property type="match status" value="1"/>
</dbReference>
<gene>
    <name type="primary">EI24</name>
    <name type="synonym">PIG8</name>
</gene>
<keyword id="KW-0007">Acetylation</keyword>
<keyword id="KW-0025">Alternative splicing</keyword>
<keyword id="KW-0053">Apoptosis</keyword>
<keyword id="KW-0072">Autophagy</keyword>
<keyword id="KW-0963">Cytoplasm</keyword>
<keyword id="KW-0225">Disease variant</keyword>
<keyword id="KW-0256">Endoplasmic reticulum</keyword>
<keyword id="KW-0472">Membrane</keyword>
<keyword id="KW-0539">Nucleus</keyword>
<keyword id="KW-0597">Phosphoprotein</keyword>
<keyword id="KW-1267">Proteomics identification</keyword>
<keyword id="KW-1185">Reference proteome</keyword>
<keyword id="KW-0812">Transmembrane</keyword>
<keyword id="KW-1133">Transmembrane helix</keyword>
<evidence type="ECO:0000250" key="1"/>
<evidence type="ECO:0000250" key="2">
    <source>
        <dbReference type="UniProtKB" id="Q4KM77"/>
    </source>
</evidence>
<evidence type="ECO:0000250" key="3">
    <source>
        <dbReference type="UniProtKB" id="Q61070"/>
    </source>
</evidence>
<evidence type="ECO:0000255" key="4"/>
<evidence type="ECO:0000256" key="5">
    <source>
        <dbReference type="SAM" id="MobiDB-lite"/>
    </source>
</evidence>
<evidence type="ECO:0000269" key="6">
    <source>
    </source>
</evidence>
<evidence type="ECO:0000269" key="7">
    <source>
    </source>
</evidence>
<evidence type="ECO:0000269" key="8">
    <source>
    </source>
</evidence>
<evidence type="ECO:0000303" key="9">
    <source>
    </source>
</evidence>
<evidence type="ECO:0000305" key="10"/>
<evidence type="ECO:0007744" key="11">
    <source>
    </source>
</evidence>
<evidence type="ECO:0007744" key="12">
    <source>
    </source>
</evidence>
<evidence type="ECO:0007744" key="13">
    <source>
    </source>
</evidence>
<evidence type="ECO:0007744" key="14">
    <source>
    </source>
</evidence>
<evidence type="ECO:0007744" key="15">
    <source>
    </source>
</evidence>
<evidence type="ECO:0007744" key="16">
    <source>
    </source>
</evidence>
<evidence type="ECO:0007744" key="17">
    <source>
    </source>
</evidence>
<name>EI24_HUMAN</name>